<keyword id="KW-0963">Cytoplasm</keyword>
<keyword id="KW-0489">Methyltransferase</keyword>
<keyword id="KW-1185">Reference proteome</keyword>
<keyword id="KW-0949">S-adenosyl-L-methionine</keyword>
<keyword id="KW-0808">Transferase</keyword>
<keyword id="KW-0819">tRNA processing</keyword>
<reference key="1">
    <citation type="journal article" date="2006" name="BMC Genomics">
        <title>The genome of the square archaeon Haloquadratum walsbyi: life at the limits of water activity.</title>
        <authorList>
            <person name="Bolhuis H."/>
            <person name="Palm P."/>
            <person name="Wende A."/>
            <person name="Falb M."/>
            <person name="Rampp M."/>
            <person name="Rodriguez-Valera F."/>
            <person name="Pfeiffer F."/>
            <person name="Oesterhelt D."/>
        </authorList>
    </citation>
    <scope>NUCLEOTIDE SEQUENCE [LARGE SCALE GENOMIC DNA]</scope>
    <source>
        <strain>DSM 16790 / HBSQ001</strain>
    </source>
</reference>
<evidence type="ECO:0000255" key="1">
    <source>
        <dbReference type="HAMAP-Rule" id="MF_00077"/>
    </source>
</evidence>
<sequence>MKRSCENDVSVLRYGHRPGRDDRMTTHVGLTARALGADQVIFPDNATQSAETVSDIVSRFGGPFDVERTDGLNATIREWSGTVIHLTMYGERVQDVTEVIRETCLHHQPLLIIIGGEKVPSDVYEWADWNIAVTNQPHSEVAGLAVFLDRLFMGQELEQEWAGAEHVVVPQACGKRVVDAELTTEADEMNAEK</sequence>
<gene>
    <name type="ordered locus">HQ_2492A</name>
</gene>
<name>TRM56_HALWD</name>
<proteinExistence type="inferred from homology"/>
<accession>Q18HD7</accession>
<organism>
    <name type="scientific">Haloquadratum walsbyi (strain DSM 16790 / HBSQ001)</name>
    <dbReference type="NCBI Taxonomy" id="362976"/>
    <lineage>
        <taxon>Archaea</taxon>
        <taxon>Methanobacteriati</taxon>
        <taxon>Methanobacteriota</taxon>
        <taxon>Stenosarchaea group</taxon>
        <taxon>Halobacteria</taxon>
        <taxon>Halobacteriales</taxon>
        <taxon>Haloferacaceae</taxon>
        <taxon>Haloquadratum</taxon>
    </lineage>
</organism>
<comment type="function">
    <text evidence="1">Specifically catalyzes the AdoMet-dependent 2'-O-ribose methylation of cytidine at position 56 in tRNAs.</text>
</comment>
<comment type="catalytic activity">
    <reaction evidence="1">
        <text>cytidine(56) in tRNA + S-adenosyl-L-methionine = 2'-O-methylcytidine(56) in tRNA + S-adenosyl-L-homocysteine + H(+)</text>
        <dbReference type="Rhea" id="RHEA:42968"/>
        <dbReference type="Rhea" id="RHEA-COMP:10308"/>
        <dbReference type="Rhea" id="RHEA-COMP:10309"/>
        <dbReference type="ChEBI" id="CHEBI:15378"/>
        <dbReference type="ChEBI" id="CHEBI:57856"/>
        <dbReference type="ChEBI" id="CHEBI:59789"/>
        <dbReference type="ChEBI" id="CHEBI:74495"/>
        <dbReference type="ChEBI" id="CHEBI:82748"/>
        <dbReference type="EC" id="2.1.1.206"/>
    </reaction>
</comment>
<comment type="subunit">
    <text evidence="1">Homodimer.</text>
</comment>
<comment type="subcellular location">
    <subcellularLocation>
        <location evidence="1">Cytoplasm</location>
    </subcellularLocation>
</comment>
<comment type="similarity">
    <text evidence="1">Belongs to the aTrm56 family.</text>
</comment>
<protein>
    <recommendedName>
        <fullName evidence="1">tRNA (cytidine(56)-2'-O)-methyltransferase</fullName>
        <ecNumber evidence="1">2.1.1.206</ecNumber>
    </recommendedName>
    <alternativeName>
        <fullName evidence="1">tRNA ribose 2'-O-methyltransferase aTrm56</fullName>
    </alternativeName>
</protein>
<dbReference type="EC" id="2.1.1.206" evidence="1"/>
<dbReference type="EMBL" id="AM180088">
    <property type="protein sequence ID" value="CAJ52605.1"/>
    <property type="molecule type" value="Genomic_DNA"/>
</dbReference>
<dbReference type="RefSeq" id="WP_011571724.1">
    <property type="nucleotide sequence ID" value="NC_008212.1"/>
</dbReference>
<dbReference type="SMR" id="Q18HD7"/>
<dbReference type="STRING" id="362976.HQ_2492A"/>
<dbReference type="GeneID" id="4192971"/>
<dbReference type="KEGG" id="hwa:HQ_2492A"/>
<dbReference type="eggNOG" id="arCOG01857">
    <property type="taxonomic scope" value="Archaea"/>
</dbReference>
<dbReference type="HOGENOM" id="CLU_123709_0_0_2"/>
<dbReference type="Proteomes" id="UP000001975">
    <property type="component" value="Chromosome"/>
</dbReference>
<dbReference type="GO" id="GO:0005737">
    <property type="term" value="C:cytoplasm"/>
    <property type="evidence" value="ECO:0007669"/>
    <property type="project" value="UniProtKB-SubCell"/>
</dbReference>
<dbReference type="GO" id="GO:0106059">
    <property type="term" value="F:tRNA (cytidine(56)-2'-O)-methyltransferase activity"/>
    <property type="evidence" value="ECO:0007669"/>
    <property type="project" value="UniProtKB-EC"/>
</dbReference>
<dbReference type="GO" id="GO:0002128">
    <property type="term" value="P:tRNA nucleoside ribose methylation"/>
    <property type="evidence" value="ECO:0007669"/>
    <property type="project" value="UniProtKB-UniRule"/>
</dbReference>
<dbReference type="Gene3D" id="3.40.1280.10">
    <property type="match status" value="1"/>
</dbReference>
<dbReference type="HAMAP" id="MF_00077">
    <property type="entry name" value="tRNA_methyltr_aTrm56"/>
    <property type="match status" value="1"/>
</dbReference>
<dbReference type="InterPro" id="IPR029028">
    <property type="entry name" value="Alpha/beta_knot_MTases"/>
</dbReference>
<dbReference type="InterPro" id="IPR029026">
    <property type="entry name" value="tRNA_m1G_MTases_N"/>
</dbReference>
<dbReference type="InterPro" id="IPR002845">
    <property type="entry name" value="tRNA_mtfrase_aTrm56"/>
</dbReference>
<dbReference type="NCBIfam" id="NF003048">
    <property type="entry name" value="PRK03958.1"/>
    <property type="match status" value="1"/>
</dbReference>
<dbReference type="PANTHER" id="PTHR42197">
    <property type="entry name" value="TRNA (CYTIDINE(56)-2'-O)-METHYLTRANSFERASE"/>
    <property type="match status" value="1"/>
</dbReference>
<dbReference type="PANTHER" id="PTHR42197:SF1">
    <property type="entry name" value="TRNA (CYTIDINE(56)-2'-O)-METHYLTRANSFERASE"/>
    <property type="match status" value="1"/>
</dbReference>
<dbReference type="Pfam" id="PF01994">
    <property type="entry name" value="Trm56"/>
    <property type="match status" value="1"/>
</dbReference>
<dbReference type="PIRSF" id="PIRSF016123">
    <property type="entry name" value="UCP016123"/>
    <property type="match status" value="1"/>
</dbReference>
<dbReference type="SUPFAM" id="SSF75217">
    <property type="entry name" value="alpha/beta knot"/>
    <property type="match status" value="1"/>
</dbReference>
<feature type="chain" id="PRO_0000365300" description="tRNA (cytidine(56)-2'-O)-methyltransferase">
    <location>
        <begin position="1"/>
        <end position="193"/>
    </location>
</feature>
<feature type="binding site" evidence="1">
    <location>
        <position position="86"/>
    </location>
    <ligand>
        <name>S-adenosyl-L-methionine</name>
        <dbReference type="ChEBI" id="CHEBI:59789"/>
    </ligand>
</feature>
<feature type="binding site" evidence="1">
    <location>
        <begin position="115"/>
        <end position="119"/>
    </location>
    <ligand>
        <name>S-adenosyl-L-methionine</name>
        <dbReference type="ChEBI" id="CHEBI:59789"/>
    </ligand>
</feature>